<name>IBPA_ECOLC</name>
<sequence>MRNFDLSPLYRSAIGFDRLFNHLENNQSQSNGGYPPYNVELVDENHYRIAIAVAGFAESELEITAQDNLLVVKGAHADEQKERTYLYQGIAERNFERKFQLAENIHVRGANLVNGLLYIDLERVIPEAKKPRRIEIN</sequence>
<keyword id="KW-0143">Chaperone</keyword>
<keyword id="KW-0963">Cytoplasm</keyword>
<keyword id="KW-0346">Stress response</keyword>
<organism>
    <name type="scientific">Escherichia coli (strain ATCC 8739 / DSM 1576 / NBRC 3972 / NCIMB 8545 / WDCM 00012 / Crooks)</name>
    <dbReference type="NCBI Taxonomy" id="481805"/>
    <lineage>
        <taxon>Bacteria</taxon>
        <taxon>Pseudomonadati</taxon>
        <taxon>Pseudomonadota</taxon>
        <taxon>Gammaproteobacteria</taxon>
        <taxon>Enterobacterales</taxon>
        <taxon>Enterobacteriaceae</taxon>
        <taxon>Escherichia</taxon>
    </lineage>
</organism>
<gene>
    <name evidence="1" type="primary">ibpA</name>
    <name type="ordered locus">EcolC_0016</name>
</gene>
<proteinExistence type="inferred from homology"/>
<feature type="chain" id="PRO_1000088537" description="Small heat shock protein IbpA">
    <location>
        <begin position="1"/>
        <end position="137"/>
    </location>
</feature>
<feature type="domain" description="sHSP" evidence="2">
    <location>
        <begin position="28"/>
        <end position="137"/>
    </location>
</feature>
<reference key="1">
    <citation type="submission" date="2008-02" db="EMBL/GenBank/DDBJ databases">
        <title>Complete sequence of Escherichia coli C str. ATCC 8739.</title>
        <authorList>
            <person name="Copeland A."/>
            <person name="Lucas S."/>
            <person name="Lapidus A."/>
            <person name="Glavina del Rio T."/>
            <person name="Dalin E."/>
            <person name="Tice H."/>
            <person name="Bruce D."/>
            <person name="Goodwin L."/>
            <person name="Pitluck S."/>
            <person name="Kiss H."/>
            <person name="Brettin T."/>
            <person name="Detter J.C."/>
            <person name="Han C."/>
            <person name="Kuske C.R."/>
            <person name="Schmutz J."/>
            <person name="Larimer F."/>
            <person name="Land M."/>
            <person name="Hauser L."/>
            <person name="Kyrpides N."/>
            <person name="Mikhailova N."/>
            <person name="Ingram L."/>
            <person name="Richardson P."/>
        </authorList>
    </citation>
    <scope>NUCLEOTIDE SEQUENCE [LARGE SCALE GENOMIC DNA]</scope>
    <source>
        <strain>ATCC 8739 / DSM 1576 / NBRC 3972 / NCIMB 8545 / WDCM 00012 / Crooks</strain>
    </source>
</reference>
<evidence type="ECO:0000255" key="1">
    <source>
        <dbReference type="HAMAP-Rule" id="MF_02000"/>
    </source>
</evidence>
<evidence type="ECO:0000255" key="2">
    <source>
        <dbReference type="PROSITE-ProRule" id="PRU00285"/>
    </source>
</evidence>
<dbReference type="EMBL" id="CP000946">
    <property type="protein sequence ID" value="ACA75704.1"/>
    <property type="molecule type" value="Genomic_DNA"/>
</dbReference>
<dbReference type="RefSeq" id="WP_001243437.1">
    <property type="nucleotide sequence ID" value="NZ_MTFT01000013.1"/>
</dbReference>
<dbReference type="SMR" id="B1IYQ7"/>
<dbReference type="GeneID" id="93778428"/>
<dbReference type="KEGG" id="ecl:EcolC_0016"/>
<dbReference type="HOGENOM" id="CLU_046737_4_2_6"/>
<dbReference type="GO" id="GO:0005737">
    <property type="term" value="C:cytoplasm"/>
    <property type="evidence" value="ECO:0007669"/>
    <property type="project" value="UniProtKB-SubCell"/>
</dbReference>
<dbReference type="GO" id="GO:0050821">
    <property type="term" value="P:protein stabilization"/>
    <property type="evidence" value="ECO:0007669"/>
    <property type="project" value="UniProtKB-UniRule"/>
</dbReference>
<dbReference type="CDD" id="cd06470">
    <property type="entry name" value="ACD_IbpA-B_like"/>
    <property type="match status" value="1"/>
</dbReference>
<dbReference type="FunFam" id="2.60.40.790:FF:000002">
    <property type="entry name" value="Small heat shock protein IbpA"/>
    <property type="match status" value="1"/>
</dbReference>
<dbReference type="Gene3D" id="2.60.40.790">
    <property type="match status" value="1"/>
</dbReference>
<dbReference type="HAMAP" id="MF_02000">
    <property type="entry name" value="HSP20_IbpA"/>
    <property type="match status" value="1"/>
</dbReference>
<dbReference type="InterPro" id="IPR002068">
    <property type="entry name" value="A-crystallin/Hsp20_dom"/>
</dbReference>
<dbReference type="InterPro" id="IPR037913">
    <property type="entry name" value="ACD_IbpA/B"/>
</dbReference>
<dbReference type="InterPro" id="IPR008978">
    <property type="entry name" value="HSP20-like_chaperone"/>
</dbReference>
<dbReference type="InterPro" id="IPR023728">
    <property type="entry name" value="HSP20_IbpA"/>
</dbReference>
<dbReference type="NCBIfam" id="NF008013">
    <property type="entry name" value="PRK10743.1"/>
    <property type="match status" value="1"/>
</dbReference>
<dbReference type="PANTHER" id="PTHR47062">
    <property type="match status" value="1"/>
</dbReference>
<dbReference type="PANTHER" id="PTHR47062:SF1">
    <property type="entry name" value="SMALL HEAT SHOCK PROTEIN IBPA"/>
    <property type="match status" value="1"/>
</dbReference>
<dbReference type="Pfam" id="PF00011">
    <property type="entry name" value="HSP20"/>
    <property type="match status" value="1"/>
</dbReference>
<dbReference type="SUPFAM" id="SSF49764">
    <property type="entry name" value="HSP20-like chaperones"/>
    <property type="match status" value="1"/>
</dbReference>
<dbReference type="PROSITE" id="PS01031">
    <property type="entry name" value="SHSP"/>
    <property type="match status" value="1"/>
</dbReference>
<accession>B1IYQ7</accession>
<comment type="function">
    <text evidence="1">Associates with aggregated proteins, together with IbpB, to stabilize and protect them from irreversible denaturation and extensive proteolysis during heat shock and oxidative stress. Aggregated proteins bound to the IbpAB complex are more efficiently refolded and reactivated by the ATP-dependent chaperone systems ClpB and DnaK/DnaJ/GrpE. Its activity is ATP-independent.</text>
</comment>
<comment type="subunit">
    <text evidence="1">Monomer. Forms homomultimers of about 100-150 subunits at optimal growth temperatures. Conformation changes to monomers at high temperatures or high ionic concentrations.</text>
</comment>
<comment type="subcellular location">
    <subcellularLocation>
        <location evidence="1">Cytoplasm</location>
    </subcellularLocation>
</comment>
<comment type="similarity">
    <text evidence="1 2">Belongs to the small heat shock protein (HSP20) family.</text>
</comment>
<protein>
    <recommendedName>
        <fullName evidence="1">Small heat shock protein IbpA</fullName>
    </recommendedName>
    <alternativeName>
        <fullName evidence="1">16 kDa heat shock protein A</fullName>
    </alternativeName>
</protein>